<reference key="1">
    <citation type="submission" date="2005-08" db="EMBL/GenBank/DDBJ databases">
        <authorList>
            <consortium name="NIH - Mammalian Gene Collection (MGC) project"/>
        </authorList>
    </citation>
    <scope>NUCLEOTIDE SEQUENCE [LARGE SCALE MRNA]</scope>
    <source>
        <strain>Crossbred X Angus</strain>
        <tissue>Ileum</tissue>
    </source>
</reference>
<feature type="chain" id="PRO_0000249068" description="Multivesicular body subunit 12A">
    <location>
        <begin position="1"/>
        <end position="273"/>
    </location>
</feature>
<feature type="domain" description="MABP" evidence="4">
    <location>
        <begin position="9"/>
        <end position="151"/>
    </location>
</feature>
<feature type="domain" description="UMA" evidence="3">
    <location>
        <begin position="215"/>
        <end position="265"/>
    </location>
</feature>
<feature type="region of interest" description="Disordered" evidence="5">
    <location>
        <begin position="154"/>
        <end position="186"/>
    </location>
</feature>
<feature type="region of interest" description="Interaction with TSG101, VPS37B and VPS28" evidence="1">
    <location>
        <begin position="192"/>
        <end position="273"/>
    </location>
</feature>
<feature type="short sequence motif" description="SH3-binding">
    <location>
        <begin position="155"/>
        <end position="160"/>
    </location>
</feature>
<feature type="modified residue" description="Phosphothreonine" evidence="2">
    <location>
        <position position="130"/>
    </location>
</feature>
<feature type="modified residue" description="Phosphoserine" evidence="2">
    <location>
        <position position="163"/>
    </location>
</feature>
<feature type="modified residue" description="Phosphoserine" evidence="2">
    <location>
        <position position="170"/>
    </location>
</feature>
<feature type="modified residue" description="Phosphoserine" evidence="2">
    <location>
        <position position="195"/>
    </location>
</feature>
<feature type="modified residue" description="Phosphoserine" evidence="2">
    <location>
        <position position="202"/>
    </location>
</feature>
<feature type="modified residue" description="Phosphotyrosine" evidence="2">
    <location>
        <position position="204"/>
    </location>
</feature>
<feature type="modified residue" description="Phosphoserine" evidence="2">
    <location>
        <position position="207"/>
    </location>
</feature>
<dbReference type="EMBL" id="BC102323">
    <property type="protein sequence ID" value="AAI02324.1"/>
    <property type="molecule type" value="mRNA"/>
</dbReference>
<dbReference type="RefSeq" id="NP_001029455.1">
    <property type="nucleotide sequence ID" value="NM_001034283.2"/>
</dbReference>
<dbReference type="SMR" id="Q3T0N1"/>
<dbReference type="FunCoup" id="Q3T0N1">
    <property type="interactions" value="2135"/>
</dbReference>
<dbReference type="STRING" id="9913.ENSBTAP00000005111"/>
<dbReference type="iPTMnet" id="Q3T0N1"/>
<dbReference type="PaxDb" id="9913-ENSBTAP00000005111"/>
<dbReference type="Ensembl" id="ENSBTAT00000005111.3">
    <property type="protein sequence ID" value="ENSBTAP00000005111.2"/>
    <property type="gene ID" value="ENSBTAG00000003914.4"/>
</dbReference>
<dbReference type="GeneID" id="507199"/>
<dbReference type="KEGG" id="bta:507199"/>
<dbReference type="CTD" id="93343"/>
<dbReference type="VEuPathDB" id="HostDB:ENSBTAG00000003914"/>
<dbReference type="VGNC" id="VGNC:31766">
    <property type="gene designation" value="MVB12A"/>
</dbReference>
<dbReference type="eggNOG" id="KOG4000">
    <property type="taxonomic scope" value="Eukaryota"/>
</dbReference>
<dbReference type="GeneTree" id="ENSGT00940000160542"/>
<dbReference type="HOGENOM" id="CLU_064823_2_0_1"/>
<dbReference type="InParanoid" id="Q3T0N1"/>
<dbReference type="OMA" id="KYGYYLC"/>
<dbReference type="OrthoDB" id="6021306at2759"/>
<dbReference type="TreeFam" id="TF314477"/>
<dbReference type="Reactome" id="R-BTA-917729">
    <property type="pathway name" value="Endosomal Sorting Complex Required For Transport (ESCRT)"/>
</dbReference>
<dbReference type="Proteomes" id="UP000009136">
    <property type="component" value="Chromosome 7"/>
</dbReference>
<dbReference type="Bgee" id="ENSBTAG00000003914">
    <property type="expression patterns" value="Expressed in laryngeal cartilage and 105 other cell types or tissues"/>
</dbReference>
<dbReference type="GO" id="GO:0005813">
    <property type="term" value="C:centrosome"/>
    <property type="evidence" value="ECO:0007669"/>
    <property type="project" value="UniProtKB-SubCell"/>
</dbReference>
<dbReference type="GO" id="GO:0005829">
    <property type="term" value="C:cytosol"/>
    <property type="evidence" value="ECO:0000318"/>
    <property type="project" value="GO_Central"/>
</dbReference>
<dbReference type="GO" id="GO:0000813">
    <property type="term" value="C:ESCRT I complex"/>
    <property type="evidence" value="ECO:0000318"/>
    <property type="project" value="GO_Central"/>
</dbReference>
<dbReference type="GO" id="GO:0031902">
    <property type="term" value="C:late endosome membrane"/>
    <property type="evidence" value="ECO:0007669"/>
    <property type="project" value="UniProtKB-SubCell"/>
</dbReference>
<dbReference type="GO" id="GO:0005634">
    <property type="term" value="C:nucleus"/>
    <property type="evidence" value="ECO:0007669"/>
    <property type="project" value="UniProtKB-SubCell"/>
</dbReference>
<dbReference type="GO" id="GO:0008289">
    <property type="term" value="F:lipid binding"/>
    <property type="evidence" value="ECO:0007669"/>
    <property type="project" value="Ensembl"/>
</dbReference>
<dbReference type="GO" id="GO:0017124">
    <property type="term" value="F:SH3 domain binding"/>
    <property type="evidence" value="ECO:0007669"/>
    <property type="project" value="UniProtKB-KW"/>
</dbReference>
<dbReference type="GO" id="GO:0043130">
    <property type="term" value="F:ubiquitin binding"/>
    <property type="evidence" value="ECO:0007669"/>
    <property type="project" value="Ensembl"/>
</dbReference>
<dbReference type="GO" id="GO:0032510">
    <property type="term" value="P:endosome to lysosome transport via multivesicular body sorting pathway"/>
    <property type="evidence" value="ECO:0000318"/>
    <property type="project" value="GO_Central"/>
</dbReference>
<dbReference type="GO" id="GO:0015031">
    <property type="term" value="P:protein transport"/>
    <property type="evidence" value="ECO:0007669"/>
    <property type="project" value="UniProtKB-KW"/>
</dbReference>
<dbReference type="GO" id="GO:0032801">
    <property type="term" value="P:receptor catabolic process"/>
    <property type="evidence" value="ECO:0000318"/>
    <property type="project" value="GO_Central"/>
</dbReference>
<dbReference type="GO" id="GO:0042058">
    <property type="term" value="P:regulation of epidermal growth factor receptor signaling pathway"/>
    <property type="evidence" value="ECO:0000318"/>
    <property type="project" value="GO_Central"/>
</dbReference>
<dbReference type="GO" id="GO:0046755">
    <property type="term" value="P:viral budding"/>
    <property type="evidence" value="ECO:0000318"/>
    <property type="project" value="GO_Central"/>
</dbReference>
<dbReference type="GO" id="GO:0019075">
    <property type="term" value="P:virus maturation"/>
    <property type="evidence" value="ECO:0000318"/>
    <property type="project" value="GO_Central"/>
</dbReference>
<dbReference type="FunFam" id="2.100.10.50:FF:000003">
    <property type="entry name" value="Multivesicular body subunit 12A"/>
    <property type="match status" value="1"/>
</dbReference>
<dbReference type="Gene3D" id="2.100.10.50">
    <property type="match status" value="1"/>
</dbReference>
<dbReference type="InterPro" id="IPR023341">
    <property type="entry name" value="MABP"/>
</dbReference>
<dbReference type="InterPro" id="IPR040335">
    <property type="entry name" value="MVB12A"/>
</dbReference>
<dbReference type="InterPro" id="IPR018798">
    <property type="entry name" value="MVB12A/B"/>
</dbReference>
<dbReference type="InterPro" id="IPR023340">
    <property type="entry name" value="UMA"/>
</dbReference>
<dbReference type="PANTHER" id="PTHR31612">
    <property type="entry name" value="MULTIVESICULAR BODY SUBUNIT 12A"/>
    <property type="match status" value="1"/>
</dbReference>
<dbReference type="PANTHER" id="PTHR31612:SF2">
    <property type="entry name" value="MULTIVESICULAR BODY SUBUNIT 12A"/>
    <property type="match status" value="1"/>
</dbReference>
<dbReference type="Pfam" id="PF10240">
    <property type="entry name" value="DUF2464"/>
    <property type="match status" value="1"/>
</dbReference>
<dbReference type="PROSITE" id="PS51498">
    <property type="entry name" value="MABP"/>
    <property type="match status" value="1"/>
</dbReference>
<dbReference type="PROSITE" id="PS51497">
    <property type="entry name" value="UMA"/>
    <property type="match status" value="1"/>
</dbReference>
<evidence type="ECO:0000250" key="1"/>
<evidence type="ECO:0000250" key="2">
    <source>
        <dbReference type="UniProtKB" id="Q96EY5"/>
    </source>
</evidence>
<evidence type="ECO:0000255" key="3">
    <source>
        <dbReference type="PROSITE-ProRule" id="PRU00830"/>
    </source>
</evidence>
<evidence type="ECO:0000255" key="4">
    <source>
        <dbReference type="PROSITE-ProRule" id="PRU00831"/>
    </source>
</evidence>
<evidence type="ECO:0000256" key="5">
    <source>
        <dbReference type="SAM" id="MobiDB-lite"/>
    </source>
</evidence>
<evidence type="ECO:0000305" key="6"/>
<organism>
    <name type="scientific">Bos taurus</name>
    <name type="common">Bovine</name>
    <dbReference type="NCBI Taxonomy" id="9913"/>
    <lineage>
        <taxon>Eukaryota</taxon>
        <taxon>Metazoa</taxon>
        <taxon>Chordata</taxon>
        <taxon>Craniata</taxon>
        <taxon>Vertebrata</taxon>
        <taxon>Euteleostomi</taxon>
        <taxon>Mammalia</taxon>
        <taxon>Eutheria</taxon>
        <taxon>Laurasiatheria</taxon>
        <taxon>Artiodactyla</taxon>
        <taxon>Ruminantia</taxon>
        <taxon>Pecora</taxon>
        <taxon>Bovidae</taxon>
        <taxon>Bovinae</taxon>
        <taxon>Bos</taxon>
    </lineage>
</organism>
<comment type="function">
    <text evidence="1">Component of the ESCRT-I complex, a regulator of vesicular trafficking process. Required for the sorting of endocytic ubiquitinated cargos into multivesicular bodies. May be involved in the ligand-mediated internalization and down-regulation of EGF receptor (By similarity).</text>
</comment>
<comment type="subunit">
    <text evidence="1">Component of the ESCRT-I complex (endosomal sorting complex required for transport I) which consists of TSG101, VPS28, a VPS37 protein (VPS37A to -D) and MVB12A or MVB12B in a 1:1:1:1 stoichiometry. Interacts with CD2AP and CIN85/SH3KBP1. Interacts with CD2AP (via one of the SH3 domains). Interacts with TSG101; the association appears to be mediated by the TSG101-VPS37 binary subcomplex. Interacts with VPS28. Interacts with VPS37B; the association appears to be mediated by the TSG101-VPS37 binary subcomplex. Interacts with VPS37C; the association appears to be mediated by the TSG101-VPS37 binary subcomplex. Interacts with VPS37D; the association appears to be mediated by the TSG101-VPS37 binary subcomplex. Interacts with CEP55 (By similarity).</text>
</comment>
<comment type="subcellular location">
    <subcellularLocation>
        <location evidence="1">Cytoplasm</location>
        <location evidence="1">Cytoskeleton</location>
    </subcellularLocation>
    <subcellularLocation>
        <location evidence="1">Nucleus</location>
    </subcellularLocation>
    <subcellularLocation>
        <location>Endosome</location>
    </subcellularLocation>
    <subcellularLocation>
        <location>Cytoplasm</location>
        <location>Cytoskeleton</location>
        <location>Microtubule organizing center</location>
        <location>Centrosome</location>
    </subcellularLocation>
    <subcellularLocation>
        <location evidence="1">Late endosome membrane</location>
        <topology evidence="1">Peripheral membrane protein</topology>
    </subcellularLocation>
    <text evidence="1">Colocalizes with F-actin. Some fraction may be nuclear (By similarity).</text>
</comment>
<comment type="PTM">
    <text evidence="1">Phosphorylated on Tyr-204 upon EGF stimulation. Phosphorylation is required for interaction with CD2AP and CIN85/SH3KBP1 (By similarity).</text>
</comment>
<comment type="similarity">
    <text evidence="6">Belongs to the MVB12 family.</text>
</comment>
<name>MB12A_BOVIN</name>
<protein>
    <recommendedName>
        <fullName>Multivesicular body subunit 12A</fullName>
    </recommendedName>
    <alternativeName>
        <fullName>ESCRT-I complex subunit MVB12A</fullName>
    </alternativeName>
    <alternativeName>
        <fullName>Protein FAM125A</fullName>
    </alternativeName>
</protein>
<accession>Q3T0N1</accession>
<sequence>MDPGPGANGMPLAGLAWSSASAPPPRGFSAISCTVEGTPASFGKTFAQKSGYFLCLNPLGSLENPQENVVVDIQILVDKSPLPPGFSPVCDPLDSKASVSKKKRMCVKLVPLGAADTAVFDIRLSGKTKTVPGYLRVGDMGGFAIWCRKAKAPRPVPKPRALSRDVRDLSLDSPGQPSKGGFPERTLSRLGSRASTLRRNDSIYEASNLYGISAMDGVPFTLHPRFEGKSCGPLAFSAFADLTIKSLADIEAEYNYGFVVEKTAAARLPPSVS</sequence>
<proteinExistence type="evidence at transcript level"/>
<keyword id="KW-0963">Cytoplasm</keyword>
<keyword id="KW-0206">Cytoskeleton</keyword>
<keyword id="KW-0967">Endosome</keyword>
<keyword id="KW-0472">Membrane</keyword>
<keyword id="KW-0539">Nucleus</keyword>
<keyword id="KW-0597">Phosphoprotein</keyword>
<keyword id="KW-0653">Protein transport</keyword>
<keyword id="KW-1185">Reference proteome</keyword>
<keyword id="KW-0729">SH3-binding</keyword>
<keyword id="KW-0813">Transport</keyword>
<gene>
    <name type="primary">MVB12A</name>
    <name type="synonym">FAM125A</name>
</gene>